<gene>
    <name evidence="1" type="primary">rgy1</name>
    <name type="ordered locus">APE_1340.1</name>
</gene>
<reference key="1">
    <citation type="journal article" date="1999" name="DNA Res.">
        <title>Complete genome sequence of an aerobic hyper-thermophilic crenarchaeon, Aeropyrum pernix K1.</title>
        <authorList>
            <person name="Kawarabayasi Y."/>
            <person name="Hino Y."/>
            <person name="Horikawa H."/>
            <person name="Yamazaki S."/>
            <person name="Haikawa Y."/>
            <person name="Jin-no K."/>
            <person name="Takahashi M."/>
            <person name="Sekine M."/>
            <person name="Baba S."/>
            <person name="Ankai A."/>
            <person name="Kosugi H."/>
            <person name="Hosoyama A."/>
            <person name="Fukui S."/>
            <person name="Nagai Y."/>
            <person name="Nishijima K."/>
            <person name="Nakazawa H."/>
            <person name="Takamiya M."/>
            <person name="Masuda S."/>
            <person name="Funahashi T."/>
            <person name="Tanaka T."/>
            <person name="Kudoh Y."/>
            <person name="Yamazaki J."/>
            <person name="Kushida N."/>
            <person name="Oguchi A."/>
            <person name="Aoki K."/>
            <person name="Kubota K."/>
            <person name="Nakamura Y."/>
            <person name="Nomura N."/>
            <person name="Sako Y."/>
            <person name="Kikuchi H."/>
        </authorList>
    </citation>
    <scope>NUCLEOTIDE SEQUENCE [LARGE SCALE GENOMIC DNA]</scope>
    <source>
        <strain>ATCC 700893 / DSM 11879 / JCM 9820 / NBRC 100138 / K1</strain>
    </source>
</reference>
<keyword id="KW-0067">ATP-binding</keyword>
<keyword id="KW-0963">Cytoplasm</keyword>
<keyword id="KW-0238">DNA-binding</keyword>
<keyword id="KW-0413">Isomerase</keyword>
<keyword id="KW-0460">Magnesium</keyword>
<keyword id="KW-0479">Metal-binding</keyword>
<keyword id="KW-0547">Nucleotide-binding</keyword>
<keyword id="KW-1185">Reference proteome</keyword>
<keyword id="KW-0677">Repeat</keyword>
<keyword id="KW-0799">Topoisomerase</keyword>
<keyword id="KW-0862">Zinc</keyword>
<keyword id="KW-0863">Zinc-finger</keyword>
<proteinExistence type="inferred from homology"/>
<accession>Q9YCB6</accession>
<organism>
    <name type="scientific">Aeropyrum pernix (strain ATCC 700893 / DSM 11879 / JCM 9820 / NBRC 100138 / K1)</name>
    <dbReference type="NCBI Taxonomy" id="272557"/>
    <lineage>
        <taxon>Archaea</taxon>
        <taxon>Thermoproteota</taxon>
        <taxon>Thermoprotei</taxon>
        <taxon>Desulfurococcales</taxon>
        <taxon>Desulfurococcaceae</taxon>
        <taxon>Aeropyrum</taxon>
    </lineage>
</organism>
<sequence length="1370" mass="154734">MASARAASRGVYRYLCPNCGGPNSEERLSRGLPCPRCLPRLPRKGVSGWTGLARLLRREGTLGAGVKAMASLEEEARSLWRFFEKAVGSPPWGAQRTWAKRLARGDSFSIIAPTGVGKTTFGAAASLFYACKKGMRSYIVLPTTTLAANVARKLESMVESTGCGRVRLLVIHSKLKTSERREAMERFEKGDFDILVTTAAFARKYADRLSGYRFRLVFVDDVDAVLRSARSVDAILKIVGFDEEAIEKGLEVLRLQREQARLVGLLQSQREEVREEARKKLLEVKRRLERLEAEIEARRGRTASLIVSSATGRPRGARVRLFRVLLNFEAGGRGDIGLRRVIDSYTHPTDGVAEKVVELVRRLGTGGLVYVPIDMGVEYAERLAEELRRAGVKAEAYHAKKPLELLDRFAEGEIDVLVGVANYYGTLVRGLDLPARVRYAVFAGVPRHKFGSDIGDPHPSRLLRLLSILAESRIEEVASAARSHMGRLRRMLRVLSPAALQMIAERVARGEVEGGYDRQVLEAYQFLREALARDDVWESLRELDVGIVREGGRTYILVPDPATYLQASGRTSRLYAGGITLGLSVVVVDNEPVMRGLMKRVSWMAEVDWRRFEDLDLQSILREIDEDREKVRRVVKGLYRGVELVRTALLVVESPNKARTIARFFGQPSVRLLPGGGRVYEVATGDKILMIMASGGHVFDLVVRVDGRDLEAAGGEPEHAIFGVLRYRLGGNGAAAYTPVYTSIKRCLDCGYQFVDEASRCPRCGSELIRNSLSTVEDLRRVAWEADEVYVGTDPDTEGEKIGWDVALALRPYAPDIKRLEFHEVTKKAILEALSNPRSFDDNLVDAQVVRRVEDRWIGFTLSPLLWCDFWPRYCKRVLEEYGEKRPHMDRERCAKYKAYYNLSAGRVQTPTLGWVVDRTLAYRKKVWLYRVVHDSQLLFAVRSDDPEVPESVKRVLDNWVKHHKKTGIEPWLDVKAVVEKEEWTALPPPPPYTTDTMLRDANRLLGLGSAEAMRIAQDLFEWGLITYHRTDSTRVSDRGMQVAREWLETRFGGLAGQLYRPRRWGEGGAHEAIRPVRPIDVERLQLLVEEGVIELPGTLTRRHLRLYDLIFRRFMASQMREADALRVVYRLRVPELDGYTLTLERVVEIGRPGDAEGVTRGFTLVWPYVRPQPRLVEGREAWIRARVEGRQVPKAYPYTEGEIVEEMKTRGIGRPSTYAKIVETLFRRRYVIEVSREEGRGAGFVVATSRGINVYNYLTEELRSADEEEYGGRIAGILRRVPSLVSEDRTRELERQMDMVEKGDASRDDVLESVFNEISDLALLLNIEHPIKHRSRAEGNTQGNTWVSNFVACAVKSPEVSRVWGAGVG</sequence>
<dbReference type="EC" id="5.6.2.-" evidence="1"/>
<dbReference type="EMBL" id="BA000002">
    <property type="protein sequence ID" value="BAA80332.2"/>
    <property type="molecule type" value="Genomic_DNA"/>
</dbReference>
<dbReference type="PIR" id="F72609">
    <property type="entry name" value="F72609"/>
</dbReference>
<dbReference type="RefSeq" id="WP_010866312.1">
    <property type="nucleotide sequence ID" value="NC_000854.2"/>
</dbReference>
<dbReference type="SMR" id="Q9YCB6"/>
<dbReference type="STRING" id="272557.APE_1340.1"/>
<dbReference type="EnsemblBacteria" id="BAA80332">
    <property type="protein sequence ID" value="BAA80332"/>
    <property type="gene ID" value="APE_1340.1"/>
</dbReference>
<dbReference type="GeneID" id="1445950"/>
<dbReference type="KEGG" id="ape:APE_1340.1"/>
<dbReference type="PATRIC" id="fig|272557.25.peg.915"/>
<dbReference type="eggNOG" id="arCOG01526">
    <property type="taxonomic scope" value="Archaea"/>
</dbReference>
<dbReference type="Proteomes" id="UP000002518">
    <property type="component" value="Chromosome"/>
</dbReference>
<dbReference type="GO" id="GO:0005737">
    <property type="term" value="C:cytoplasm"/>
    <property type="evidence" value="ECO:0007669"/>
    <property type="project" value="UniProtKB-SubCell"/>
</dbReference>
<dbReference type="GO" id="GO:0005524">
    <property type="term" value="F:ATP binding"/>
    <property type="evidence" value="ECO:0007669"/>
    <property type="project" value="UniProtKB-UniRule"/>
</dbReference>
<dbReference type="GO" id="GO:0016887">
    <property type="term" value="F:ATP hydrolysis activity"/>
    <property type="evidence" value="ECO:0007669"/>
    <property type="project" value="InterPro"/>
</dbReference>
<dbReference type="GO" id="GO:0003677">
    <property type="term" value="F:DNA binding"/>
    <property type="evidence" value="ECO:0007669"/>
    <property type="project" value="UniProtKB-UniRule"/>
</dbReference>
<dbReference type="GO" id="GO:0003918">
    <property type="term" value="F:DNA topoisomerase type II (double strand cut, ATP-hydrolyzing) activity"/>
    <property type="evidence" value="ECO:0007669"/>
    <property type="project" value="UniProtKB-EC"/>
</dbReference>
<dbReference type="GO" id="GO:0160097">
    <property type="term" value="F:reverse gyrase activity"/>
    <property type="evidence" value="ECO:0007669"/>
    <property type="project" value="UniProtKB-UniRule"/>
</dbReference>
<dbReference type="GO" id="GO:0008270">
    <property type="term" value="F:zinc ion binding"/>
    <property type="evidence" value="ECO:0007669"/>
    <property type="project" value="UniProtKB-UniRule"/>
</dbReference>
<dbReference type="GO" id="GO:0006265">
    <property type="term" value="P:DNA topological change"/>
    <property type="evidence" value="ECO:0007669"/>
    <property type="project" value="UniProtKB-UniRule"/>
</dbReference>
<dbReference type="CDD" id="cd17924">
    <property type="entry name" value="DDXDc_reverse_gyrase"/>
    <property type="match status" value="1"/>
</dbReference>
<dbReference type="CDD" id="cd18798">
    <property type="entry name" value="SF2_C_reverse_gyrase"/>
    <property type="match status" value="1"/>
</dbReference>
<dbReference type="CDD" id="cd00186">
    <property type="entry name" value="TOP1Ac"/>
    <property type="match status" value="1"/>
</dbReference>
<dbReference type="CDD" id="cd03361">
    <property type="entry name" value="TOPRIM_TopoIA_RevGyr"/>
    <property type="match status" value="1"/>
</dbReference>
<dbReference type="Gene3D" id="2.60.510.20">
    <property type="match status" value="1"/>
</dbReference>
<dbReference type="Gene3D" id="3.40.50.140">
    <property type="match status" value="1"/>
</dbReference>
<dbReference type="Gene3D" id="3.40.50.300">
    <property type="entry name" value="P-loop containing nucleotide triphosphate hydrolases"/>
    <property type="match status" value="3"/>
</dbReference>
<dbReference type="Gene3D" id="1.10.460.10">
    <property type="entry name" value="Topoisomerase I, domain 2"/>
    <property type="match status" value="1"/>
</dbReference>
<dbReference type="Gene3D" id="1.10.290.10">
    <property type="entry name" value="Topoisomerase I, domain 4"/>
    <property type="match status" value="1"/>
</dbReference>
<dbReference type="HAMAP" id="MF_01125">
    <property type="entry name" value="Reverse_gyrase"/>
    <property type="match status" value="1"/>
</dbReference>
<dbReference type="InterPro" id="IPR003593">
    <property type="entry name" value="AAA+_ATPase"/>
</dbReference>
<dbReference type="InterPro" id="IPR011545">
    <property type="entry name" value="DEAD/DEAH_box_helicase_dom"/>
</dbReference>
<dbReference type="InterPro" id="IPR014001">
    <property type="entry name" value="Helicase_ATP-bd"/>
</dbReference>
<dbReference type="InterPro" id="IPR001650">
    <property type="entry name" value="Helicase_C-like"/>
</dbReference>
<dbReference type="InterPro" id="IPR027417">
    <property type="entry name" value="P-loop_NTPase"/>
</dbReference>
<dbReference type="InterPro" id="IPR005736">
    <property type="entry name" value="Reverse_gyrase"/>
</dbReference>
<dbReference type="InterPro" id="IPR003601">
    <property type="entry name" value="Topo_IA_2"/>
</dbReference>
<dbReference type="InterPro" id="IPR013497">
    <property type="entry name" value="Topo_IA_cen"/>
</dbReference>
<dbReference type="InterPro" id="IPR013824">
    <property type="entry name" value="Topo_IA_cen_sub1"/>
</dbReference>
<dbReference type="InterPro" id="IPR013826">
    <property type="entry name" value="Topo_IA_cen_sub3"/>
</dbReference>
<dbReference type="InterPro" id="IPR023405">
    <property type="entry name" value="Topo_IA_core_domain"/>
</dbReference>
<dbReference type="InterPro" id="IPR003602">
    <property type="entry name" value="Topo_IA_DNA-bd_dom"/>
</dbReference>
<dbReference type="InterPro" id="IPR006171">
    <property type="entry name" value="TOPRIM_dom"/>
</dbReference>
<dbReference type="InterPro" id="IPR034142">
    <property type="entry name" value="TOPRIM_RevGyr"/>
</dbReference>
<dbReference type="InterPro" id="IPR040569">
    <property type="entry name" value="Znf_Rg"/>
</dbReference>
<dbReference type="NCBIfam" id="TIGR01054">
    <property type="entry name" value="rgy"/>
    <property type="match status" value="1"/>
</dbReference>
<dbReference type="PANTHER" id="PTHR43505">
    <property type="entry name" value="REVERSE GYRASE"/>
    <property type="match status" value="1"/>
</dbReference>
<dbReference type="PANTHER" id="PTHR43505:SF1">
    <property type="entry name" value="REVERSE GYRASE"/>
    <property type="match status" value="1"/>
</dbReference>
<dbReference type="Pfam" id="PF00270">
    <property type="entry name" value="DEAD"/>
    <property type="match status" value="1"/>
</dbReference>
<dbReference type="Pfam" id="PF01131">
    <property type="entry name" value="Topoisom_bac"/>
    <property type="match status" value="1"/>
</dbReference>
<dbReference type="Pfam" id="PF01751">
    <property type="entry name" value="Toprim"/>
    <property type="match status" value="1"/>
</dbReference>
<dbReference type="Pfam" id="PF17915">
    <property type="entry name" value="zf_Rg"/>
    <property type="match status" value="1"/>
</dbReference>
<dbReference type="PRINTS" id="PR00417">
    <property type="entry name" value="PRTPISMRASEI"/>
</dbReference>
<dbReference type="SMART" id="SM00382">
    <property type="entry name" value="AAA"/>
    <property type="match status" value="1"/>
</dbReference>
<dbReference type="SMART" id="SM00487">
    <property type="entry name" value="DEXDc"/>
    <property type="match status" value="1"/>
</dbReference>
<dbReference type="SMART" id="SM00490">
    <property type="entry name" value="HELICc"/>
    <property type="match status" value="1"/>
</dbReference>
<dbReference type="SMART" id="SM00437">
    <property type="entry name" value="TOP1Ac"/>
    <property type="match status" value="1"/>
</dbReference>
<dbReference type="SMART" id="SM00436">
    <property type="entry name" value="TOP1Bc"/>
    <property type="match status" value="1"/>
</dbReference>
<dbReference type="SMART" id="SM00493">
    <property type="entry name" value="TOPRIM"/>
    <property type="match status" value="1"/>
</dbReference>
<dbReference type="SUPFAM" id="SSF52540">
    <property type="entry name" value="P-loop containing nucleoside triphosphate hydrolases"/>
    <property type="match status" value="2"/>
</dbReference>
<dbReference type="SUPFAM" id="SSF56712">
    <property type="entry name" value="Prokaryotic type I DNA topoisomerase"/>
    <property type="match status" value="1"/>
</dbReference>
<dbReference type="PROSITE" id="PS51192">
    <property type="entry name" value="HELICASE_ATP_BIND_1"/>
    <property type="match status" value="1"/>
</dbReference>
<dbReference type="PROSITE" id="PS52039">
    <property type="entry name" value="TOPO_IA_2"/>
    <property type="match status" value="1"/>
</dbReference>
<dbReference type="PROSITE" id="PS50880">
    <property type="entry name" value="TOPRIM"/>
    <property type="match status" value="1"/>
</dbReference>
<dbReference type="PROSITE" id="PS52037">
    <property type="entry name" value="ZF_RG_C"/>
    <property type="match status" value="1"/>
</dbReference>
<dbReference type="PROSITE" id="PS52036">
    <property type="entry name" value="ZF_RG_N"/>
    <property type="match status" value="1"/>
</dbReference>
<name>RGYR1_AERPE</name>
<protein>
    <recommendedName>
        <fullName evidence="1">Reverse gyrase 1</fullName>
        <ecNumber evidence="1">5.6.2.-</ecNumber>
    </recommendedName>
</protein>
<comment type="function">
    <text evidence="1">Modifies the topological state of DNA by introducing positive supercoils in an ATP-dependent process, increasing the linking number in steps of +1. Binds to single-stranded DNA, transiently cleaves and then rejoins the ends, introducing a positive supercoil in the process. The scissile phosphodiester is attacked by the catalytic tyrosine of the enzyme, resulting in the formation of a DNA-(5'-phosphotyrosyl)-enzyme intermediate. Probably involved in rewinding DNA strands in regions of the chromosome that have opened up to allow replication, transcription, DNA repair and/or for DNA protection.</text>
</comment>
<comment type="catalytic activity">
    <reaction evidence="1">
        <text>ATP + H2O = ADP + phosphate + H(+)</text>
        <dbReference type="Rhea" id="RHEA:13065"/>
        <dbReference type="ChEBI" id="CHEBI:15377"/>
        <dbReference type="ChEBI" id="CHEBI:15378"/>
        <dbReference type="ChEBI" id="CHEBI:30616"/>
        <dbReference type="ChEBI" id="CHEBI:43474"/>
        <dbReference type="ChEBI" id="CHEBI:456216"/>
    </reaction>
</comment>
<comment type="cofactor">
    <cofactor evidence="1">
        <name>Zn(2+)</name>
        <dbReference type="ChEBI" id="CHEBI:29105"/>
    </cofactor>
    <text evidence="1">Binds 2 zinc ions per subunit.</text>
</comment>
<comment type="cofactor">
    <cofactor evidence="1">
        <name>Mg(2+)</name>
        <dbReference type="ChEBI" id="CHEBI:18420"/>
    </cofactor>
</comment>
<comment type="subunit">
    <text evidence="1">Monomer.</text>
</comment>
<comment type="subcellular location">
    <subcellularLocation>
        <location evidence="1">Cytoplasm</location>
    </subcellularLocation>
</comment>
<comment type="domain">
    <text evidence="1">Introduction of positive supercoils requires the cooperation of both domains. The helicase-like domain probably does not directly unwind DNA, but more likely acts by driving ATP-dependent conformational changes within the whole enzyme. A beta hairpin in the 'latch' region of the N-terminal domain plays a regulatory role in the enzyme, repressing topoisomerase activity in the absence of ATP and preventing the enzyme from acting as an ATP-independent relaxing enzyme; it also helps to coordinate nucleotide hydrolysis by the ATPase domain with the supercoiling activity of the topoisomerase domain.</text>
</comment>
<comment type="miscellaneous">
    <text evidence="1">This enzyme is the only unique feature of hyperthermophilic bacteria/archaea known and seems to be essential for adaptation to life at high temperatures. It may play a role in stabilization of DNA at high temperatures.</text>
</comment>
<comment type="similarity">
    <text evidence="1">In the N-terminal section; belongs to the DEAD box helicase family. DDVD subfamily.</text>
</comment>
<comment type="similarity">
    <text evidence="1">In the C-terminal section; belongs to the type IA topoisomerase family.</text>
</comment>
<evidence type="ECO:0000255" key="1">
    <source>
        <dbReference type="HAMAP-Rule" id="MF_01125"/>
    </source>
</evidence>
<evidence type="ECO:0000255" key="2">
    <source>
        <dbReference type="PROSITE-ProRule" id="PRU01380"/>
    </source>
</evidence>
<evidence type="ECO:0000255" key="3">
    <source>
        <dbReference type="PROSITE-ProRule" id="PRU01381"/>
    </source>
</evidence>
<evidence type="ECO:0000255" key="4">
    <source>
        <dbReference type="PROSITE-ProRule" id="PRU01383"/>
    </source>
</evidence>
<feature type="chain" id="PRO_0000158084" description="Reverse gyrase 1">
    <location>
        <begin position="1"/>
        <end position="1370"/>
    </location>
</feature>
<feature type="domain" description="Helicase ATP-binding" evidence="1">
    <location>
        <begin position="99"/>
        <end position="287"/>
    </location>
</feature>
<feature type="domain" description="Toprim" evidence="1">
    <location>
        <begin position="647"/>
        <end position="825"/>
    </location>
</feature>
<feature type="domain" description="Topo IA-type catalytic" evidence="4">
    <location>
        <begin position="841"/>
        <end position="1323"/>
    </location>
</feature>
<feature type="zinc finger region" description="RG N-terminal-type" evidence="2">
    <location>
        <begin position="6"/>
        <end position="47"/>
    </location>
</feature>
<feature type="zinc finger region" description="RG C-terminal-type" evidence="3">
    <location>
        <begin position="744"/>
        <end position="772"/>
    </location>
</feature>
<feature type="region of interest" description="Topoisomerase I" evidence="1">
    <location>
        <begin position="643"/>
        <end position="1370"/>
    </location>
</feature>
<feature type="short sequence motif" description="DEAD box" evidence="1">
    <location>
        <begin position="220"/>
        <end position="223"/>
    </location>
</feature>
<feature type="active site" description="O-(5'-phospho-DNA)-tyrosine intermediate" evidence="4">
    <location>
        <position position="1028"/>
    </location>
</feature>
<feature type="binding site" evidence="1">
    <location>
        <position position="16"/>
    </location>
    <ligand>
        <name>Zn(2+)</name>
        <dbReference type="ChEBI" id="CHEBI:29105"/>
        <label>1</label>
    </ligand>
</feature>
<feature type="binding site" evidence="1">
    <location>
        <position position="19"/>
    </location>
    <ligand>
        <name>Zn(2+)</name>
        <dbReference type="ChEBI" id="CHEBI:29105"/>
        <label>1</label>
    </ligand>
</feature>
<feature type="binding site" evidence="1">
    <location>
        <position position="34"/>
    </location>
    <ligand>
        <name>Zn(2+)</name>
        <dbReference type="ChEBI" id="CHEBI:29105"/>
        <label>1</label>
    </ligand>
</feature>
<feature type="binding site" evidence="1">
    <location>
        <position position="37"/>
    </location>
    <ligand>
        <name>Zn(2+)</name>
        <dbReference type="ChEBI" id="CHEBI:29105"/>
        <label>1</label>
    </ligand>
</feature>
<feature type="binding site" evidence="1">
    <location>
        <position position="95"/>
    </location>
    <ligand>
        <name>ATP</name>
        <dbReference type="ChEBI" id="CHEBI:30616"/>
    </ligand>
</feature>
<feature type="binding site" evidence="1">
    <location>
        <begin position="112"/>
        <end position="119"/>
    </location>
    <ligand>
        <name>ATP</name>
        <dbReference type="ChEBI" id="CHEBI:30616"/>
    </ligand>
</feature>
<feature type="binding site" evidence="1">
    <location>
        <position position="653"/>
    </location>
    <ligand>
        <name>Mg(2+)</name>
        <dbReference type="ChEBI" id="CHEBI:18420"/>
        <note>catalytic</note>
    </ligand>
</feature>
<feature type="binding site" evidence="1">
    <location>
        <position position="747"/>
    </location>
    <ligand>
        <name>Zn(2+)</name>
        <dbReference type="ChEBI" id="CHEBI:29105"/>
        <label>2</label>
    </ligand>
</feature>
<feature type="binding site" evidence="1">
    <location>
        <position position="750"/>
    </location>
    <ligand>
        <name>Zn(2+)</name>
        <dbReference type="ChEBI" id="CHEBI:29105"/>
        <label>2</label>
    </ligand>
</feature>
<feature type="binding site" evidence="1">
    <location>
        <position position="761"/>
    </location>
    <ligand>
        <name>Zn(2+)</name>
        <dbReference type="ChEBI" id="CHEBI:29105"/>
        <label>2</label>
    </ligand>
</feature>
<feature type="binding site" evidence="1">
    <location>
        <position position="764"/>
    </location>
    <ligand>
        <name>Zn(2+)</name>
        <dbReference type="ChEBI" id="CHEBI:29105"/>
        <label>2</label>
    </ligand>
</feature>
<feature type="binding site" evidence="1">
    <location>
        <position position="794"/>
    </location>
    <ligand>
        <name>Mg(2+)</name>
        <dbReference type="ChEBI" id="CHEBI:18420"/>
        <note>catalytic</note>
    </ligand>
</feature>